<evidence type="ECO:0000255" key="1">
    <source>
        <dbReference type="HAMAP-Rule" id="MF_00185"/>
    </source>
</evidence>
<comment type="function">
    <text evidence="1">Catalyzes the transfer of a dimethylallyl group onto the adenine at position 37 in tRNAs that read codons beginning with uridine, leading to the formation of N6-(dimethylallyl)adenosine (i(6)A).</text>
</comment>
<comment type="catalytic activity">
    <reaction evidence="1">
        <text>adenosine(37) in tRNA + dimethylallyl diphosphate = N(6)-dimethylallyladenosine(37) in tRNA + diphosphate</text>
        <dbReference type="Rhea" id="RHEA:26482"/>
        <dbReference type="Rhea" id="RHEA-COMP:10162"/>
        <dbReference type="Rhea" id="RHEA-COMP:10375"/>
        <dbReference type="ChEBI" id="CHEBI:33019"/>
        <dbReference type="ChEBI" id="CHEBI:57623"/>
        <dbReference type="ChEBI" id="CHEBI:74411"/>
        <dbReference type="ChEBI" id="CHEBI:74415"/>
        <dbReference type="EC" id="2.5.1.75"/>
    </reaction>
</comment>
<comment type="cofactor">
    <cofactor evidence="1">
        <name>Mg(2+)</name>
        <dbReference type="ChEBI" id="CHEBI:18420"/>
    </cofactor>
</comment>
<comment type="subunit">
    <text evidence="1">Monomer.</text>
</comment>
<comment type="similarity">
    <text evidence="1">Belongs to the IPP transferase family.</text>
</comment>
<protein>
    <recommendedName>
        <fullName evidence="1">tRNA dimethylallyltransferase</fullName>
        <ecNumber evidence="1">2.5.1.75</ecNumber>
    </recommendedName>
    <alternativeName>
        <fullName evidence="1">Dimethylallyl diphosphate:tRNA dimethylallyltransferase</fullName>
        <shortName evidence="1">DMAPP:tRNA dimethylallyltransferase</shortName>
        <shortName evidence="1">DMATase</shortName>
    </alternativeName>
    <alternativeName>
        <fullName evidence="1">Isopentenyl-diphosphate:tRNA isopentenyltransferase</fullName>
        <shortName evidence="1">IPP transferase</shortName>
        <shortName evidence="1">IPPT</shortName>
        <shortName evidence="1">IPTase</shortName>
    </alternativeName>
</protein>
<sequence length="302" mass="33776">MTKLIVICGATATGKSSLALALAMRLGSVIISADSRQVYRKFDIGTAKPTVAEQKLVPHYLIDICDPTDTMTVADYQEQTQALIASVDVTPLLLVGGTGLYIRSIVQGMKIPRVAPQIELRSQLESLGQLQLYAMLQQVDPVAAQKIHANDSVRTLRALEVYYVTGCPISEQQGENPPNYPILQIGLDCDVEKLGNRIKQRTEQMIADGLVAEVEYLCQKYGADLSLLNTLGYQEIKQYLAGDISLDEAKELTILHTRQFAKRQRTWFRAYPQIEWFDANNPDLLDKIWLRINEFTNCTHSS</sequence>
<reference key="1">
    <citation type="journal article" date="2013" name="Plant Physiol.">
        <title>A Nostoc punctiforme Sugar Transporter Necessary to Establish a Cyanobacterium-Plant Symbiosis.</title>
        <authorList>
            <person name="Ekman M."/>
            <person name="Picossi S."/>
            <person name="Campbell E.L."/>
            <person name="Meeks J.C."/>
            <person name="Flores E."/>
        </authorList>
    </citation>
    <scope>NUCLEOTIDE SEQUENCE [LARGE SCALE GENOMIC DNA]</scope>
    <source>
        <strain>ATCC 29133 / PCC 73102</strain>
    </source>
</reference>
<organism>
    <name type="scientific">Nostoc punctiforme (strain ATCC 29133 / PCC 73102)</name>
    <dbReference type="NCBI Taxonomy" id="63737"/>
    <lineage>
        <taxon>Bacteria</taxon>
        <taxon>Bacillati</taxon>
        <taxon>Cyanobacteriota</taxon>
        <taxon>Cyanophyceae</taxon>
        <taxon>Nostocales</taxon>
        <taxon>Nostocaceae</taxon>
        <taxon>Nostoc</taxon>
    </lineage>
</organism>
<gene>
    <name evidence="1" type="primary">miaA</name>
    <name type="ordered locus">Npun_R6372</name>
</gene>
<name>MIAA_NOSP7</name>
<feature type="chain" id="PRO_1000098673" description="tRNA dimethylallyltransferase">
    <location>
        <begin position="1"/>
        <end position="302"/>
    </location>
</feature>
<feature type="region of interest" description="Interaction with substrate tRNA" evidence="1">
    <location>
        <begin position="34"/>
        <end position="37"/>
    </location>
</feature>
<feature type="binding site" evidence="1">
    <location>
        <begin position="9"/>
        <end position="16"/>
    </location>
    <ligand>
        <name>ATP</name>
        <dbReference type="ChEBI" id="CHEBI:30616"/>
    </ligand>
</feature>
<feature type="binding site" evidence="1">
    <location>
        <begin position="11"/>
        <end position="16"/>
    </location>
    <ligand>
        <name>substrate</name>
    </ligand>
</feature>
<feature type="site" description="Interaction with substrate tRNA" evidence="1">
    <location>
        <position position="98"/>
    </location>
</feature>
<dbReference type="EC" id="2.5.1.75" evidence="1"/>
<dbReference type="EMBL" id="CP001037">
    <property type="protein sequence ID" value="ACC84644.1"/>
    <property type="molecule type" value="Genomic_DNA"/>
</dbReference>
<dbReference type="RefSeq" id="WP_012412583.1">
    <property type="nucleotide sequence ID" value="NC_010628.1"/>
</dbReference>
<dbReference type="SMR" id="B2IY45"/>
<dbReference type="STRING" id="63737.Npun_R6372"/>
<dbReference type="EnsemblBacteria" id="ACC84644">
    <property type="protein sequence ID" value="ACC84644"/>
    <property type="gene ID" value="Npun_R6372"/>
</dbReference>
<dbReference type="KEGG" id="npu:Npun_R6372"/>
<dbReference type="eggNOG" id="COG0324">
    <property type="taxonomic scope" value="Bacteria"/>
</dbReference>
<dbReference type="HOGENOM" id="CLU_032616_0_1_3"/>
<dbReference type="OrthoDB" id="9776390at2"/>
<dbReference type="PhylomeDB" id="B2IY45"/>
<dbReference type="Proteomes" id="UP000001191">
    <property type="component" value="Chromosome"/>
</dbReference>
<dbReference type="GO" id="GO:0005524">
    <property type="term" value="F:ATP binding"/>
    <property type="evidence" value="ECO:0007669"/>
    <property type="project" value="UniProtKB-UniRule"/>
</dbReference>
<dbReference type="GO" id="GO:0052381">
    <property type="term" value="F:tRNA dimethylallyltransferase activity"/>
    <property type="evidence" value="ECO:0007669"/>
    <property type="project" value="UniProtKB-UniRule"/>
</dbReference>
<dbReference type="GO" id="GO:0006400">
    <property type="term" value="P:tRNA modification"/>
    <property type="evidence" value="ECO:0007669"/>
    <property type="project" value="TreeGrafter"/>
</dbReference>
<dbReference type="Gene3D" id="1.10.20.140">
    <property type="match status" value="1"/>
</dbReference>
<dbReference type="Gene3D" id="3.40.50.300">
    <property type="entry name" value="P-loop containing nucleotide triphosphate hydrolases"/>
    <property type="match status" value="1"/>
</dbReference>
<dbReference type="HAMAP" id="MF_00185">
    <property type="entry name" value="IPP_trans"/>
    <property type="match status" value="1"/>
</dbReference>
<dbReference type="InterPro" id="IPR039657">
    <property type="entry name" value="Dimethylallyltransferase"/>
</dbReference>
<dbReference type="InterPro" id="IPR018022">
    <property type="entry name" value="IPT"/>
</dbReference>
<dbReference type="InterPro" id="IPR027417">
    <property type="entry name" value="P-loop_NTPase"/>
</dbReference>
<dbReference type="NCBIfam" id="TIGR00174">
    <property type="entry name" value="miaA"/>
    <property type="match status" value="1"/>
</dbReference>
<dbReference type="PANTHER" id="PTHR11088">
    <property type="entry name" value="TRNA DIMETHYLALLYLTRANSFERASE"/>
    <property type="match status" value="1"/>
</dbReference>
<dbReference type="PANTHER" id="PTHR11088:SF60">
    <property type="entry name" value="TRNA DIMETHYLALLYLTRANSFERASE"/>
    <property type="match status" value="1"/>
</dbReference>
<dbReference type="Pfam" id="PF01715">
    <property type="entry name" value="IPPT"/>
    <property type="match status" value="1"/>
</dbReference>
<dbReference type="SUPFAM" id="SSF52540">
    <property type="entry name" value="P-loop containing nucleoside triphosphate hydrolases"/>
    <property type="match status" value="2"/>
</dbReference>
<keyword id="KW-0067">ATP-binding</keyword>
<keyword id="KW-0460">Magnesium</keyword>
<keyword id="KW-0547">Nucleotide-binding</keyword>
<keyword id="KW-1185">Reference proteome</keyword>
<keyword id="KW-0808">Transferase</keyword>
<keyword id="KW-0819">tRNA processing</keyword>
<accession>B2IY45</accession>
<proteinExistence type="inferred from homology"/>